<keyword id="KW-0963">Cytoplasm</keyword>
<keyword id="KW-0597">Phosphoprotein</keyword>
<keyword id="KW-1185">Reference proteome</keyword>
<reference key="1">
    <citation type="submission" date="2005-08" db="EMBL/GenBank/DDBJ databases">
        <authorList>
            <consortium name="NIH - Mammalian Gene Collection (MGC) project"/>
        </authorList>
    </citation>
    <scope>NUCLEOTIDE SEQUENCE [LARGE SCALE MRNA]</scope>
    <source>
        <strain>Crossbred X Angus</strain>
        <tissue>Ileum</tissue>
    </source>
</reference>
<organism>
    <name type="scientific">Bos taurus</name>
    <name type="common">Bovine</name>
    <dbReference type="NCBI Taxonomy" id="9913"/>
    <lineage>
        <taxon>Eukaryota</taxon>
        <taxon>Metazoa</taxon>
        <taxon>Chordata</taxon>
        <taxon>Craniata</taxon>
        <taxon>Vertebrata</taxon>
        <taxon>Euteleostomi</taxon>
        <taxon>Mammalia</taxon>
        <taxon>Eutheria</taxon>
        <taxon>Laurasiatheria</taxon>
        <taxon>Artiodactyla</taxon>
        <taxon>Ruminantia</taxon>
        <taxon>Pecora</taxon>
        <taxon>Bovidae</taxon>
        <taxon>Bovinae</taxon>
        <taxon>Bos</taxon>
    </lineage>
</organism>
<evidence type="ECO:0000250" key="1">
    <source>
        <dbReference type="UniProtKB" id="Q96KN4"/>
    </source>
</evidence>
<evidence type="ECO:0000255" key="2">
    <source>
        <dbReference type="PROSITE-ProRule" id="PRU01283"/>
    </source>
</evidence>
<evidence type="ECO:0000305" key="3"/>
<gene>
    <name type="primary">LRATD1</name>
    <name type="synonym">FAM84A</name>
</gene>
<sequence length="297" mass="33127">MGNQLDRITHLNYSELPTGDPSGIEKDELRVGVAYFFSDEEEDLDERGQPDKFGVKAPPGCAPCPESPSRHHHHHHHHHLLHQLVLNETQFSAFRGQECIFSKVSGGPQGADLSVYAVTALPALCEPGDLLELLWLQPAPEPPAPAPHWAVYVGGGQIIHLCQGEIRQDSLYEAGAANVGRVVNSWYRYRPLVAELVVQNACGHLGLKSEEICWTNSESFAAWCRFGKREFKAGGEVPAGTQPPQQQYYLKVHLADNKVHTARFHSLEDLIREKRRIDASGRLRVLQELADLVDDKE</sequence>
<proteinExistence type="evidence at transcript level"/>
<accession>Q3ZCA1</accession>
<name>LRAT1_BOVIN</name>
<dbReference type="EMBL" id="BC102698">
    <property type="protein sequence ID" value="AAI02699.1"/>
    <property type="molecule type" value="mRNA"/>
</dbReference>
<dbReference type="RefSeq" id="NP_001029831.1">
    <property type="nucleotide sequence ID" value="NM_001034659.2"/>
</dbReference>
<dbReference type="RefSeq" id="XP_005213085.1">
    <property type="nucleotide sequence ID" value="XM_005213028.5"/>
</dbReference>
<dbReference type="SMR" id="Q3ZCA1"/>
<dbReference type="FunCoup" id="Q3ZCA1">
    <property type="interactions" value="142"/>
</dbReference>
<dbReference type="STRING" id="9913.ENSBTAP00000006512"/>
<dbReference type="PaxDb" id="9913-ENSBTAP00000006512"/>
<dbReference type="Ensembl" id="ENSBTAT00000089532.1">
    <property type="protein sequence ID" value="ENSBTAP00000091672.1"/>
    <property type="gene ID" value="ENSBTAG00000004948.7"/>
</dbReference>
<dbReference type="Ensembl" id="ENSBTAT00000090010.1">
    <property type="protein sequence ID" value="ENSBTAP00000086282.1"/>
    <property type="gene ID" value="ENSBTAG00000004948.7"/>
</dbReference>
<dbReference type="Ensembl" id="ENSBTAT00000103579.1">
    <property type="protein sequence ID" value="ENSBTAP00000092158.1"/>
    <property type="gene ID" value="ENSBTAG00000004948.7"/>
</dbReference>
<dbReference type="GeneID" id="539071"/>
<dbReference type="KEGG" id="bta:539071"/>
<dbReference type="CTD" id="151354"/>
<dbReference type="VEuPathDB" id="HostDB:ENSBTAG00000004948"/>
<dbReference type="VGNC" id="VGNC:28840">
    <property type="gene designation" value="LRATD1"/>
</dbReference>
<dbReference type="eggNOG" id="ENOG502QPSG">
    <property type="taxonomic scope" value="Eukaryota"/>
</dbReference>
<dbReference type="GeneTree" id="ENSGT00940000161165"/>
<dbReference type="HOGENOM" id="CLU_082142_0_0_1"/>
<dbReference type="InParanoid" id="Q3ZCA1"/>
<dbReference type="OMA" id="IYEHDDQ"/>
<dbReference type="OrthoDB" id="6157531at2759"/>
<dbReference type="TreeFam" id="TF330836"/>
<dbReference type="Proteomes" id="UP000009136">
    <property type="component" value="Chromosome 11"/>
</dbReference>
<dbReference type="Bgee" id="ENSBTAG00000004948">
    <property type="expression patterns" value="Expressed in oviduct epithelium and 98 other cell types or tissues"/>
</dbReference>
<dbReference type="GO" id="GO:0005737">
    <property type="term" value="C:cytoplasm"/>
    <property type="evidence" value="ECO:0007669"/>
    <property type="project" value="UniProtKB-SubCell"/>
</dbReference>
<dbReference type="GO" id="GO:0000902">
    <property type="term" value="P:cell morphogenesis"/>
    <property type="evidence" value="ECO:0000250"/>
    <property type="project" value="UniProtKB"/>
</dbReference>
<dbReference type="GO" id="GO:0048870">
    <property type="term" value="P:cell motility"/>
    <property type="evidence" value="ECO:0000250"/>
    <property type="project" value="UniProtKB"/>
</dbReference>
<dbReference type="FunFam" id="3.90.1720.10:FF:000003">
    <property type="entry name" value="FAM84B isoform 1"/>
    <property type="match status" value="1"/>
</dbReference>
<dbReference type="Gene3D" id="3.90.1720.10">
    <property type="entry name" value="endopeptidase domain like (from Nostoc punctiforme)"/>
    <property type="match status" value="1"/>
</dbReference>
<dbReference type="InterPro" id="IPR007053">
    <property type="entry name" value="LRAT_dom"/>
</dbReference>
<dbReference type="InterPro" id="IPR043299">
    <property type="entry name" value="LRATD1_LRATD2"/>
</dbReference>
<dbReference type="PANTHER" id="PTHR46341">
    <property type="entry name" value="PROTEIN FAM84B-RELATED"/>
    <property type="match status" value="1"/>
</dbReference>
<dbReference type="PANTHER" id="PTHR46341:SF1">
    <property type="entry name" value="PROTEIN LRATD1"/>
    <property type="match status" value="1"/>
</dbReference>
<dbReference type="Pfam" id="PF04970">
    <property type="entry name" value="LRAT"/>
    <property type="match status" value="1"/>
</dbReference>
<dbReference type="PROSITE" id="PS51934">
    <property type="entry name" value="LRAT"/>
    <property type="match status" value="1"/>
</dbReference>
<protein>
    <recommendedName>
        <fullName evidence="3">Protein LRATD1</fullName>
    </recommendedName>
    <alternativeName>
        <fullName>LRAT domain-containing 1</fullName>
    </alternativeName>
    <alternativeName>
        <fullName>Protein FAM84A</fullName>
    </alternativeName>
</protein>
<comment type="function">
    <text evidence="1">May play a role in cell morphology and motility.</text>
</comment>
<comment type="subcellular location">
    <subcellularLocation>
        <location evidence="1">Cytoplasm</location>
    </subcellularLocation>
</comment>
<comment type="similarity">
    <text evidence="3">Belongs to the LRATD family.</text>
</comment>
<feature type="chain" id="PRO_0000234424" description="Protein LRATD1">
    <location>
        <begin position="1"/>
        <end position="297"/>
    </location>
</feature>
<feature type="domain" description="LRAT" evidence="2">
    <location>
        <begin position="138"/>
        <end position="233"/>
    </location>
</feature>
<feature type="modified residue" description="Phosphoserine" evidence="1">
    <location>
        <position position="38"/>
    </location>
</feature>